<keyword id="KW-0256">Endoplasmic reticulum</keyword>
<keyword id="KW-0967">Endosome</keyword>
<keyword id="KW-0333">Golgi apparatus</keyword>
<keyword id="KW-0449">Lipoprotein</keyword>
<keyword id="KW-0675">Receptor</keyword>
<keyword id="KW-1185">Reference proteome</keyword>
<proteinExistence type="inferred from homology"/>
<evidence type="ECO:0000269" key="1">
    <source>
    </source>
</evidence>
<evidence type="ECO:0000303" key="2">
    <source>
    </source>
</evidence>
<evidence type="ECO:0000305" key="3"/>
<gene>
    <name evidence="2" type="primary">LRP1</name>
    <name type="ORF">MGG_04076</name>
</gene>
<accession>G4NGN5</accession>
<dbReference type="EMBL" id="CM001236">
    <property type="protein sequence ID" value="EHA47395.1"/>
    <property type="molecule type" value="Genomic_DNA"/>
</dbReference>
<dbReference type="RefSeq" id="XP_003719762.1">
    <property type="nucleotide sequence ID" value="XM_003719714.1"/>
</dbReference>
<dbReference type="SMR" id="G4NGN5"/>
<dbReference type="STRING" id="242507.G4NGN5"/>
<dbReference type="EnsemblFungi" id="MGG_04076T0">
    <property type="protein sequence ID" value="MGG_04076T0"/>
    <property type="gene ID" value="MGG_04076"/>
</dbReference>
<dbReference type="GeneID" id="2677505"/>
<dbReference type="KEGG" id="mgr:MGG_04076"/>
<dbReference type="VEuPathDB" id="FungiDB:MGG_04076"/>
<dbReference type="eggNOG" id="KOG1215">
    <property type="taxonomic scope" value="Eukaryota"/>
</dbReference>
<dbReference type="HOGENOM" id="CLU_072072_0_0_1"/>
<dbReference type="InParanoid" id="G4NGN5"/>
<dbReference type="OMA" id="GMKVMRC"/>
<dbReference type="OrthoDB" id="5958943at2759"/>
<dbReference type="Proteomes" id="UP000009058">
    <property type="component" value="Chromosome 6"/>
</dbReference>
<dbReference type="Gene3D" id="2.120.10.30">
    <property type="entry name" value="TolB, C-terminal domain"/>
    <property type="match status" value="2"/>
</dbReference>
<dbReference type="InterPro" id="IPR011042">
    <property type="entry name" value="6-blade_b-propeller_TolB-like"/>
</dbReference>
<dbReference type="InterPro" id="IPR050778">
    <property type="entry name" value="Cueball_EGF_LRP_Nidogen"/>
</dbReference>
<dbReference type="InterPro" id="IPR000033">
    <property type="entry name" value="LDLR_classB_rpt"/>
</dbReference>
<dbReference type="PANTHER" id="PTHR46513">
    <property type="entry name" value="VITELLOGENIN RECEPTOR-LIKE PROTEIN-RELATED-RELATED"/>
    <property type="match status" value="1"/>
</dbReference>
<dbReference type="SMART" id="SM00135">
    <property type="entry name" value="LY"/>
    <property type="match status" value="3"/>
</dbReference>
<dbReference type="SUPFAM" id="SSF63829">
    <property type="entry name" value="Calcium-dependent phosphotriesterase"/>
    <property type="match status" value="1"/>
</dbReference>
<name>LRP1_PYRO7</name>
<reference key="1">
    <citation type="journal article" date="2005" name="Nature">
        <title>The genome sequence of the rice blast fungus Magnaporthe grisea.</title>
        <authorList>
            <person name="Dean R.A."/>
            <person name="Talbot N.J."/>
            <person name="Ebbole D.J."/>
            <person name="Farman M.L."/>
            <person name="Mitchell T.K."/>
            <person name="Orbach M.J."/>
            <person name="Thon M.R."/>
            <person name="Kulkarni R."/>
            <person name="Xu J.-R."/>
            <person name="Pan H."/>
            <person name="Read N.D."/>
            <person name="Lee Y.-H."/>
            <person name="Carbone I."/>
            <person name="Brown D."/>
            <person name="Oh Y.Y."/>
            <person name="Donofrio N."/>
            <person name="Jeong J.S."/>
            <person name="Soanes D.M."/>
            <person name="Djonovic S."/>
            <person name="Kolomiets E."/>
            <person name="Rehmeyer C."/>
            <person name="Li W."/>
            <person name="Harding M."/>
            <person name="Kim S."/>
            <person name="Lebrun M.-H."/>
            <person name="Bohnert H."/>
            <person name="Coughlan S."/>
            <person name="Butler J."/>
            <person name="Calvo S.E."/>
            <person name="Ma L.-J."/>
            <person name="Nicol R."/>
            <person name="Purcell S."/>
            <person name="Nusbaum C."/>
            <person name="Galagan J.E."/>
            <person name="Birren B.W."/>
        </authorList>
    </citation>
    <scope>NUCLEOTIDE SEQUENCE [LARGE SCALE GENOMIC DNA]</scope>
    <source>
        <strain>70-15 / ATCC MYA-4617 / FGSC 8958</strain>
    </source>
</reference>
<reference key="2">
    <citation type="journal article" date="2023" name="Plant Commun.">
        <title>MoLrp1-mediated signaling induces nuclear accumulation of MoMsn2 to facilitate fatty acid oxidation for infectious growth of the rice blast fungus.</title>
        <authorList>
            <person name="Zhang T."/>
            <person name="Wang X."/>
            <person name="Li X."/>
            <person name="Li Y.N."/>
            <person name="Li Y."/>
            <person name="Wu S."/>
            <person name="Xu L."/>
            <person name="Zhou R."/>
            <person name="Yang J."/>
            <person name="Li G."/>
            <person name="Liu X."/>
            <person name="Zheng X."/>
            <person name="Zhang Z."/>
            <person name="Zhang H."/>
        </authorList>
    </citation>
    <scope>FUNCTION</scope>
    <scope>DISRUPTION PHENOTYPE</scope>
    <scope>SUBCELLULAR LOCATION</scope>
</reference>
<organism>
    <name type="scientific">Pyricularia oryzae (strain 70-15 / ATCC MYA-4617 / FGSC 8958)</name>
    <name type="common">Rice blast fungus</name>
    <name type="synonym">Magnaporthe oryzae</name>
    <dbReference type="NCBI Taxonomy" id="242507"/>
    <lineage>
        <taxon>Eukaryota</taxon>
        <taxon>Fungi</taxon>
        <taxon>Dikarya</taxon>
        <taxon>Ascomycota</taxon>
        <taxon>Pezizomycotina</taxon>
        <taxon>Sordariomycetes</taxon>
        <taxon>Sordariomycetidae</taxon>
        <taxon>Magnaporthales</taxon>
        <taxon>Pyriculariaceae</taxon>
        <taxon>Pyricularia</taxon>
    </lineage>
</organism>
<protein>
    <recommendedName>
        <fullName evidence="2">Low-density lipoprotein receptor-related protein 1</fullName>
    </recommendedName>
    <alternativeName>
        <fullName evidence="2">LDLR-related protein 1</fullName>
    </alternativeName>
</protein>
<sequence>MSTQPSHRLYILDTDLSTNVSTRHGRIISCRPDGSDLRTVVDGIKNLPDGIVVDHDRGLMYWTSMGTSLSAEGGSIERAKLDGSDHKTIIASGTVGVFTPKQITLARRSGKLYWCDREGMKVMRANTDGSGVEVLWSTGNAAEEDDRRDQMRWCVGVGVDEERGFVYWTQKGPSKGGKGRVFRGPLSQSPFSPDDVEVLIDGLPEPIDLEVDEQSGTLYWTDRGDPPTGNSLNCVSIADVEGVMNGTARGQVRTLARRLHETIGLALDKSGGVCYVTDLAGGVYAVDIKSGQKTVIFSELGDTTGIALV</sequence>
<feature type="chain" id="PRO_0000462289" description="Low-density lipoprotein receptor-related protein 1">
    <location>
        <begin position="1"/>
        <end position="309"/>
    </location>
</feature>
<comment type="function">
    <text evidence="1">Involved in endocytosis, fatty acid beta-oxidation and infectious growth (PubMed:36774535). Plays a critical role in the accumulation of MSN2 from the cytosol to the nucleus by activating the cyclic AMP signaling pathway (PubMed:36774535). MSN2 can then target the dienoyl-coenzyme A isomerase DCI1 and other genes involved in fatty acid beta-oxidation, which is important for lipid droplets degradation and infectious growth (PubMed:36774535).</text>
</comment>
<comment type="subcellular location">
    <subcellularLocation>
        <location evidence="1">Endoplasmic reticulum</location>
    </subcellularLocation>
    <subcellularLocation>
        <location evidence="1">Golgi apparatus</location>
    </subcellularLocation>
    <subcellularLocation>
        <location evidence="2">Endosome</location>
    </subcellularLocation>
</comment>
<comment type="disruption phenotype">
    <text evidence="1">Leads to excessive accumulation of lipid droplets and restricted infectious growth in rice (PubMed:36774535). Impairs the cytosol-to-nucleus accumulation of MSN2 upon oleate treatment (PubMed:36774535).</text>
</comment>
<comment type="similarity">
    <text evidence="3">Belongs to the LDLR family.</text>
</comment>